<protein>
    <recommendedName>
        <fullName>Defect at low temperature protein 1</fullName>
    </recommendedName>
</protein>
<organism>
    <name type="scientific">Saccharomyces cerevisiae (strain Lalvin EC1118 / Prise de mousse)</name>
    <name type="common">Baker's yeast</name>
    <dbReference type="NCBI Taxonomy" id="643680"/>
    <lineage>
        <taxon>Eukaryota</taxon>
        <taxon>Fungi</taxon>
        <taxon>Dikarya</taxon>
        <taxon>Ascomycota</taxon>
        <taxon>Saccharomycotina</taxon>
        <taxon>Saccharomycetes</taxon>
        <taxon>Saccharomycetales</taxon>
        <taxon>Saccharomycetaceae</taxon>
        <taxon>Saccharomyces</taxon>
    </lineage>
</organism>
<accession>C8ZEY1</accession>
<comment type="function">
    <text evidence="1">Required for growth under high-pressure and low-temperature conditions.</text>
</comment>
<comment type="subcellular location">
    <subcellularLocation>
        <location evidence="3">Membrane</location>
        <topology evidence="3">Multi-pass membrane protein</topology>
    </subcellularLocation>
</comment>
<comment type="similarity">
    <text evidence="3">Belongs to the DLT1 family.</text>
</comment>
<sequence length="342" mass="39187">MSGFAKLKSWLYKASLFVSLILLIGFSVVLPIDSIAQASKSENNAFNTFIVVGALVVFGVFCIFIIIGRMLFHKSCLKDIPRRYIPITPADLPHRSSREAVLQNMERSKELTILLKKPKDPVIHDGLEPPRRCDYPLDEKLFPEYLNYADCIKSLTDRLKYHGLFLNNLDVRMNLEDTFADVVNSQFVNHNANKIQLEKAKEFIDLYETIRFSGKDVTRDQFIKFVKFCLYFGEVSLTRDTSFANLHNFRLNGSSNNIGRTESKYSINPFDENEYAQDDMHYFPEPPTHLVRESSISTVARHVSSGVDLTNSEEHPLDTDSDCNALRLKLSKADSYRSVIRH</sequence>
<keyword id="KW-0472">Membrane</keyword>
<keyword id="KW-0812">Transmembrane</keyword>
<keyword id="KW-1133">Transmembrane helix</keyword>
<evidence type="ECO:0000250" key="1"/>
<evidence type="ECO:0000255" key="2"/>
<evidence type="ECO:0000305" key="3"/>
<proteinExistence type="inferred from homology"/>
<name>DLT1_YEAS8</name>
<reference key="1">
    <citation type="journal article" date="2009" name="Proc. Natl. Acad. Sci. U.S.A.">
        <title>Eukaryote-to-eukaryote gene transfer events revealed by the genome sequence of the wine yeast Saccharomyces cerevisiae EC1118.</title>
        <authorList>
            <person name="Novo M."/>
            <person name="Bigey F."/>
            <person name="Beyne E."/>
            <person name="Galeote V."/>
            <person name="Gavory F."/>
            <person name="Mallet S."/>
            <person name="Cambon B."/>
            <person name="Legras J.-L."/>
            <person name="Wincker P."/>
            <person name="Casaregola S."/>
            <person name="Dequin S."/>
        </authorList>
    </citation>
    <scope>NUCLEOTIDE SEQUENCE [LARGE SCALE GENOMIC DNA]</scope>
    <source>
        <strain>Lalvin EC1118 / Prise de mousse</strain>
    </source>
</reference>
<gene>
    <name type="primary">DLT1</name>
    <name type="ORF">EC1118_1M3_3026g</name>
</gene>
<feature type="chain" id="PRO_0000399027" description="Defect at low temperature protein 1">
    <location>
        <begin position="1"/>
        <end position="342"/>
    </location>
</feature>
<feature type="topological domain" description="Cytoplasmic" evidence="2">
    <location>
        <begin position="1"/>
        <end position="15"/>
    </location>
</feature>
<feature type="transmembrane region" description="Helical" evidence="2">
    <location>
        <begin position="16"/>
        <end position="36"/>
    </location>
</feature>
<feature type="topological domain" description="Extracellular" evidence="2">
    <location>
        <begin position="37"/>
        <end position="47"/>
    </location>
</feature>
<feature type="transmembrane region" description="Helical" evidence="2">
    <location>
        <begin position="48"/>
        <end position="68"/>
    </location>
</feature>
<feature type="topological domain" description="Cytoplasmic" evidence="2">
    <location>
        <begin position="69"/>
        <end position="342"/>
    </location>
</feature>
<dbReference type="EMBL" id="FN393082">
    <property type="protein sequence ID" value="CAY81947.1"/>
    <property type="molecule type" value="Genomic_DNA"/>
</dbReference>
<dbReference type="HOGENOM" id="CLU_066044_0_0_1"/>
<dbReference type="OrthoDB" id="6588at4893"/>
<dbReference type="Proteomes" id="UP000000286">
    <property type="component" value="Chromosome XIII, Scaffold EC1118_1M3"/>
</dbReference>
<dbReference type="GO" id="GO:0016020">
    <property type="term" value="C:membrane"/>
    <property type="evidence" value="ECO:0007669"/>
    <property type="project" value="UniProtKB-SubCell"/>
</dbReference>
<dbReference type="InterPro" id="IPR038869">
    <property type="entry name" value="DLT1"/>
</dbReference>
<dbReference type="PANTHER" id="PTHR40021">
    <property type="entry name" value="DEFECT AT LOW TEMPERATURE PROTEIN 1"/>
    <property type="match status" value="1"/>
</dbReference>
<dbReference type="PANTHER" id="PTHR40021:SF1">
    <property type="entry name" value="DEFECT AT LOW TEMPERATURE PROTEIN 1"/>
    <property type="match status" value="1"/>
</dbReference>